<accession>A7XZT2</accession>
<feature type="signal peptide" evidence="2">
    <location>
        <begin position="1"/>
        <end position="24"/>
    </location>
</feature>
<feature type="chain" id="PRO_0000393222" description="Probable alpha-galactosidase B">
    <location>
        <begin position="25"/>
        <end position="452"/>
    </location>
</feature>
<feature type="active site" description="Nucleophile" evidence="1">
    <location>
        <position position="157"/>
    </location>
</feature>
<feature type="active site" description="Proton donor" evidence="1">
    <location>
        <position position="253"/>
    </location>
</feature>
<feature type="binding site" evidence="1">
    <location>
        <begin position="231"/>
        <end position="235"/>
    </location>
    <ligand>
        <name>substrate</name>
    </ligand>
</feature>
<feature type="glycosylation site" description="N-linked (GlcNAc...) asparagine" evidence="2">
    <location>
        <position position="87"/>
    </location>
</feature>
<feature type="glycosylation site" description="N-linked (GlcNAc...) asparagine" evidence="2">
    <location>
        <position position="138"/>
    </location>
</feature>
<feature type="glycosylation site" description="N-linked (GlcNAc...) asparagine" evidence="2">
    <location>
        <position position="184"/>
    </location>
</feature>
<feature type="glycosylation site" description="N-linked (GlcNAc...) asparagine" evidence="2">
    <location>
        <position position="292"/>
    </location>
</feature>
<feature type="glycosylation site" description="N-linked (GlcNAc...) asparagine" evidence="2">
    <location>
        <position position="391"/>
    </location>
</feature>
<feature type="glycosylation site" description="N-linked (GlcNAc...) asparagine" evidence="2">
    <location>
        <position position="409"/>
    </location>
</feature>
<feature type="glycosylation site" description="N-linked (GlcNAc...) asparagine" evidence="2">
    <location>
        <position position="410"/>
    </location>
</feature>
<feature type="disulfide bond" evidence="1">
    <location>
        <begin position="47"/>
        <end position="79"/>
    </location>
</feature>
<feature type="disulfide bond" evidence="1">
    <location>
        <begin position="129"/>
        <end position="159"/>
    </location>
</feature>
<comment type="function">
    <text evidence="1">Hydrolyzes a variety of simple alpha-D-galactoside as well as more complex molecules such as oligosaccharides and polysaccharides.</text>
</comment>
<comment type="catalytic activity">
    <reaction>
        <text>Hydrolysis of terminal, non-reducing alpha-D-galactose residues in alpha-D-galactosides, including galactose oligosaccharides, galactomannans and galactolipids.</text>
        <dbReference type="EC" id="3.2.1.22"/>
    </reaction>
</comment>
<comment type="subcellular location">
    <subcellularLocation>
        <location evidence="3">Secreted</location>
    </subcellularLocation>
</comment>
<comment type="similarity">
    <text evidence="3">Belongs to the glycosyl hydrolase 27 family.</text>
</comment>
<reference key="1">
    <citation type="submission" date="2007-08" db="EMBL/GenBank/DDBJ databases">
        <authorList>
            <person name="Murray P.G."/>
            <person name="Gernig A."/>
            <person name="Simila J."/>
            <person name="Fernandes S.L."/>
            <person name="Tuohy M.G."/>
        </authorList>
    </citation>
    <scope>NUCLEOTIDE SEQUENCE [GENOMIC DNA]</scope>
</reference>
<protein>
    <recommendedName>
        <fullName>Probable alpha-galactosidase B</fullName>
        <ecNumber>3.2.1.22</ecNumber>
    </recommendedName>
    <alternativeName>
        <fullName>Melibiase B</fullName>
    </alternativeName>
</protein>
<organism>
    <name type="scientific">Talaromyces emersonii</name>
    <name type="common">Thermophilic fungus</name>
    <name type="synonym">Rasamsonia emersonii</name>
    <dbReference type="NCBI Taxonomy" id="68825"/>
    <lineage>
        <taxon>Eukaryota</taxon>
        <taxon>Fungi</taxon>
        <taxon>Dikarya</taxon>
        <taxon>Ascomycota</taxon>
        <taxon>Pezizomycotina</taxon>
        <taxon>Eurotiomycetes</taxon>
        <taxon>Eurotiomycetidae</taxon>
        <taxon>Eurotiales</taxon>
        <taxon>Trichocomaceae</taxon>
        <taxon>Rasamsonia</taxon>
    </lineage>
</organism>
<dbReference type="EC" id="3.2.1.22"/>
<dbReference type="EMBL" id="EU106878">
    <property type="protein sequence ID" value="ABU94728.1"/>
    <property type="molecule type" value="Genomic_DNA"/>
</dbReference>
<dbReference type="SMR" id="A7XZT2"/>
<dbReference type="CAZy" id="GH27">
    <property type="family name" value="Glycoside Hydrolase Family 27"/>
</dbReference>
<dbReference type="GO" id="GO:0005576">
    <property type="term" value="C:extracellular region"/>
    <property type="evidence" value="ECO:0007669"/>
    <property type="project" value="UniProtKB-SubCell"/>
</dbReference>
<dbReference type="GO" id="GO:0004557">
    <property type="term" value="F:alpha-galactosidase activity"/>
    <property type="evidence" value="ECO:0007669"/>
    <property type="project" value="UniProtKB-EC"/>
</dbReference>
<dbReference type="GO" id="GO:0005975">
    <property type="term" value="P:carbohydrate metabolic process"/>
    <property type="evidence" value="ECO:0007669"/>
    <property type="project" value="InterPro"/>
</dbReference>
<dbReference type="CDD" id="cd14792">
    <property type="entry name" value="GH27"/>
    <property type="match status" value="1"/>
</dbReference>
<dbReference type="Gene3D" id="3.20.20.70">
    <property type="entry name" value="Aldolase class I"/>
    <property type="match status" value="1"/>
</dbReference>
<dbReference type="Gene3D" id="2.60.40.1180">
    <property type="entry name" value="Golgi alpha-mannosidase II"/>
    <property type="match status" value="1"/>
</dbReference>
<dbReference type="InterPro" id="IPR013785">
    <property type="entry name" value="Aldolase_TIM"/>
</dbReference>
<dbReference type="InterPro" id="IPR002241">
    <property type="entry name" value="Glyco_hydro_27"/>
</dbReference>
<dbReference type="InterPro" id="IPR000111">
    <property type="entry name" value="Glyco_hydro_27/36_CS"/>
</dbReference>
<dbReference type="InterPro" id="IPR013780">
    <property type="entry name" value="Glyco_hydro_b"/>
</dbReference>
<dbReference type="InterPro" id="IPR017853">
    <property type="entry name" value="Glycoside_hydrolase_SF"/>
</dbReference>
<dbReference type="InterPro" id="IPR041233">
    <property type="entry name" value="Melibiase_C"/>
</dbReference>
<dbReference type="PANTHER" id="PTHR11452:SF61">
    <property type="entry name" value="ALPHA-GALACTOSIDASE B-RELATED"/>
    <property type="match status" value="1"/>
</dbReference>
<dbReference type="PANTHER" id="PTHR11452">
    <property type="entry name" value="ALPHA-GALACTOSIDASE/ALPHA-N-ACETYLGALACTOSAMINIDASE"/>
    <property type="match status" value="1"/>
</dbReference>
<dbReference type="Pfam" id="PF16499">
    <property type="entry name" value="Melibiase_2"/>
    <property type="match status" value="2"/>
</dbReference>
<dbReference type="Pfam" id="PF17801">
    <property type="entry name" value="Melibiase_C"/>
    <property type="match status" value="1"/>
</dbReference>
<dbReference type="PRINTS" id="PR00740">
    <property type="entry name" value="GLHYDRLASE27"/>
</dbReference>
<dbReference type="SUPFAM" id="SSF51445">
    <property type="entry name" value="(Trans)glycosidases"/>
    <property type="match status" value="1"/>
</dbReference>
<dbReference type="SUPFAM" id="SSF51011">
    <property type="entry name" value="Glycosyl hydrolase domain"/>
    <property type="match status" value="1"/>
</dbReference>
<dbReference type="PROSITE" id="PS00512">
    <property type="entry name" value="ALPHA_GALACTOSIDASE"/>
    <property type="match status" value="1"/>
</dbReference>
<keyword id="KW-1015">Disulfide bond</keyword>
<keyword id="KW-0325">Glycoprotein</keyword>
<keyword id="KW-0326">Glycosidase</keyword>
<keyword id="KW-0378">Hydrolase</keyword>
<keyword id="KW-0964">Secreted</keyword>
<keyword id="KW-0732">Signal</keyword>
<sequence>MLHRATTTAAAAAAAALLLCPVQALVRPDGVGKLPALGWNSWNAFGCDIDEEKILTAANQIVNLGLKDLGYEYVNIDDCWSVKSGRNATTGRIMPDLTKFPDGISGLAEKIHNLGLKIGIYSSAGWTTCAGYPASLGNETIDAETFAEWGIDYLKYDNCGVPPDWQDQYSYCVPDSGDPATNPNGTCPNLQNPAPAVYDWRTSKTAERYRRMRDALLGVQDKRTILFSLCDWGQADVNEWGAETGNSWRMSGDISPNWPRISTIANLNSFELNSVDFWGHNDPDMLEVGNGNLTLAENRAHFALWAAMKSPLIIGTALDKIDQDHLSILSNKYLLTFHQDPQIGRPAYPYKWGYNPDWTFDPGHPAEYWSGPTSSGDVLVLMLNTESGPANRTAVWSEVPELKGRNNNNNSSSTGFQVTDAWTGSSLGCVQGGYSVELESHDVAVLVVSGEC</sequence>
<evidence type="ECO:0000250" key="1"/>
<evidence type="ECO:0000255" key="2"/>
<evidence type="ECO:0000305" key="3"/>
<name>AGALB_TALEM</name>
<proteinExistence type="inferred from homology"/>